<accession>A8MLJ8</accession>
<keyword id="KW-0227">DNA damage</keyword>
<keyword id="KW-0234">DNA repair</keyword>
<keyword id="KW-0235">DNA replication</keyword>
<keyword id="KW-0436">Ligase</keyword>
<keyword id="KW-0460">Magnesium</keyword>
<keyword id="KW-0464">Manganese</keyword>
<keyword id="KW-0479">Metal-binding</keyword>
<keyword id="KW-0520">NAD</keyword>
<keyword id="KW-1185">Reference proteome</keyword>
<keyword id="KW-0862">Zinc</keyword>
<organism>
    <name type="scientific">Alkaliphilus oremlandii (strain OhILAs)</name>
    <name type="common">Clostridium oremlandii (strain OhILAs)</name>
    <dbReference type="NCBI Taxonomy" id="350688"/>
    <lineage>
        <taxon>Bacteria</taxon>
        <taxon>Bacillati</taxon>
        <taxon>Bacillota</taxon>
        <taxon>Clostridia</taxon>
        <taxon>Peptostreptococcales</taxon>
        <taxon>Natronincolaceae</taxon>
        <taxon>Alkaliphilus</taxon>
    </lineage>
</organism>
<evidence type="ECO:0000255" key="1">
    <source>
        <dbReference type="HAMAP-Rule" id="MF_01588"/>
    </source>
</evidence>
<dbReference type="EC" id="6.5.1.2" evidence="1"/>
<dbReference type="EMBL" id="CP000853">
    <property type="protein sequence ID" value="ABW18112.1"/>
    <property type="molecule type" value="Genomic_DNA"/>
</dbReference>
<dbReference type="RefSeq" id="WP_012158426.1">
    <property type="nucleotide sequence ID" value="NC_009922.1"/>
</dbReference>
<dbReference type="SMR" id="A8MLJ8"/>
<dbReference type="STRING" id="350688.Clos_0550"/>
<dbReference type="KEGG" id="aoe:Clos_0550"/>
<dbReference type="eggNOG" id="COG0272">
    <property type="taxonomic scope" value="Bacteria"/>
</dbReference>
<dbReference type="HOGENOM" id="CLU_007764_2_1_9"/>
<dbReference type="OrthoDB" id="9759736at2"/>
<dbReference type="Proteomes" id="UP000000269">
    <property type="component" value="Chromosome"/>
</dbReference>
<dbReference type="GO" id="GO:0005829">
    <property type="term" value="C:cytosol"/>
    <property type="evidence" value="ECO:0007669"/>
    <property type="project" value="TreeGrafter"/>
</dbReference>
<dbReference type="GO" id="GO:0003677">
    <property type="term" value="F:DNA binding"/>
    <property type="evidence" value="ECO:0007669"/>
    <property type="project" value="InterPro"/>
</dbReference>
<dbReference type="GO" id="GO:0003911">
    <property type="term" value="F:DNA ligase (NAD+) activity"/>
    <property type="evidence" value="ECO:0007669"/>
    <property type="project" value="UniProtKB-UniRule"/>
</dbReference>
<dbReference type="GO" id="GO:0046872">
    <property type="term" value="F:metal ion binding"/>
    <property type="evidence" value="ECO:0007669"/>
    <property type="project" value="UniProtKB-KW"/>
</dbReference>
<dbReference type="GO" id="GO:0006281">
    <property type="term" value="P:DNA repair"/>
    <property type="evidence" value="ECO:0007669"/>
    <property type="project" value="UniProtKB-KW"/>
</dbReference>
<dbReference type="GO" id="GO:0006260">
    <property type="term" value="P:DNA replication"/>
    <property type="evidence" value="ECO:0007669"/>
    <property type="project" value="UniProtKB-KW"/>
</dbReference>
<dbReference type="CDD" id="cd17748">
    <property type="entry name" value="BRCT_DNA_ligase_like"/>
    <property type="match status" value="1"/>
</dbReference>
<dbReference type="CDD" id="cd00114">
    <property type="entry name" value="LIGANc"/>
    <property type="match status" value="1"/>
</dbReference>
<dbReference type="FunFam" id="1.10.150.20:FF:000007">
    <property type="entry name" value="DNA ligase"/>
    <property type="match status" value="1"/>
</dbReference>
<dbReference type="Gene3D" id="1.10.150.20">
    <property type="entry name" value="5' to 3' exonuclease, C-terminal subdomain"/>
    <property type="match status" value="2"/>
</dbReference>
<dbReference type="Gene3D" id="3.40.50.10190">
    <property type="entry name" value="BRCT domain"/>
    <property type="match status" value="1"/>
</dbReference>
<dbReference type="Gene3D" id="3.30.470.30">
    <property type="entry name" value="DNA ligase/mRNA capping enzyme"/>
    <property type="match status" value="1"/>
</dbReference>
<dbReference type="Gene3D" id="1.10.287.610">
    <property type="entry name" value="Helix hairpin bin"/>
    <property type="match status" value="1"/>
</dbReference>
<dbReference type="Gene3D" id="2.40.50.140">
    <property type="entry name" value="Nucleic acid-binding proteins"/>
    <property type="match status" value="1"/>
</dbReference>
<dbReference type="HAMAP" id="MF_01588">
    <property type="entry name" value="DNA_ligase_A"/>
    <property type="match status" value="1"/>
</dbReference>
<dbReference type="InterPro" id="IPR001357">
    <property type="entry name" value="BRCT_dom"/>
</dbReference>
<dbReference type="InterPro" id="IPR036420">
    <property type="entry name" value="BRCT_dom_sf"/>
</dbReference>
<dbReference type="InterPro" id="IPR041663">
    <property type="entry name" value="DisA/LigA_HHH"/>
</dbReference>
<dbReference type="InterPro" id="IPR001679">
    <property type="entry name" value="DNA_ligase"/>
</dbReference>
<dbReference type="InterPro" id="IPR013839">
    <property type="entry name" value="DNAligase_adenylation"/>
</dbReference>
<dbReference type="InterPro" id="IPR013840">
    <property type="entry name" value="DNAligase_N"/>
</dbReference>
<dbReference type="InterPro" id="IPR003583">
    <property type="entry name" value="Hlx-hairpin-Hlx_DNA-bd_motif"/>
</dbReference>
<dbReference type="InterPro" id="IPR012340">
    <property type="entry name" value="NA-bd_OB-fold"/>
</dbReference>
<dbReference type="InterPro" id="IPR004150">
    <property type="entry name" value="NAD_DNA_ligase_OB"/>
</dbReference>
<dbReference type="InterPro" id="IPR010994">
    <property type="entry name" value="RuvA_2-like"/>
</dbReference>
<dbReference type="NCBIfam" id="TIGR00575">
    <property type="entry name" value="dnlj"/>
    <property type="match status" value="1"/>
</dbReference>
<dbReference type="NCBIfam" id="NF005932">
    <property type="entry name" value="PRK07956.1"/>
    <property type="match status" value="1"/>
</dbReference>
<dbReference type="PANTHER" id="PTHR23389">
    <property type="entry name" value="CHROMOSOME TRANSMISSION FIDELITY FACTOR 18"/>
    <property type="match status" value="1"/>
</dbReference>
<dbReference type="PANTHER" id="PTHR23389:SF9">
    <property type="entry name" value="DNA LIGASE"/>
    <property type="match status" value="1"/>
</dbReference>
<dbReference type="Pfam" id="PF00533">
    <property type="entry name" value="BRCT"/>
    <property type="match status" value="1"/>
</dbReference>
<dbReference type="Pfam" id="PF01653">
    <property type="entry name" value="DNA_ligase_aden"/>
    <property type="match status" value="1"/>
</dbReference>
<dbReference type="Pfam" id="PF03120">
    <property type="entry name" value="DNA_ligase_OB"/>
    <property type="match status" value="1"/>
</dbReference>
<dbReference type="Pfam" id="PF12826">
    <property type="entry name" value="HHH_2"/>
    <property type="match status" value="1"/>
</dbReference>
<dbReference type="Pfam" id="PF14520">
    <property type="entry name" value="HHH_5"/>
    <property type="match status" value="1"/>
</dbReference>
<dbReference type="Pfam" id="PF22745">
    <property type="entry name" value="Nlig-Ia"/>
    <property type="match status" value="1"/>
</dbReference>
<dbReference type="PIRSF" id="PIRSF001604">
    <property type="entry name" value="LigA"/>
    <property type="match status" value="1"/>
</dbReference>
<dbReference type="SMART" id="SM00292">
    <property type="entry name" value="BRCT"/>
    <property type="match status" value="1"/>
</dbReference>
<dbReference type="SMART" id="SM00278">
    <property type="entry name" value="HhH1"/>
    <property type="match status" value="4"/>
</dbReference>
<dbReference type="SMART" id="SM00532">
    <property type="entry name" value="LIGANc"/>
    <property type="match status" value="1"/>
</dbReference>
<dbReference type="SUPFAM" id="SSF52113">
    <property type="entry name" value="BRCT domain"/>
    <property type="match status" value="1"/>
</dbReference>
<dbReference type="SUPFAM" id="SSF56091">
    <property type="entry name" value="DNA ligase/mRNA capping enzyme, catalytic domain"/>
    <property type="match status" value="1"/>
</dbReference>
<dbReference type="SUPFAM" id="SSF50249">
    <property type="entry name" value="Nucleic acid-binding proteins"/>
    <property type="match status" value="1"/>
</dbReference>
<dbReference type="SUPFAM" id="SSF47781">
    <property type="entry name" value="RuvA domain 2-like"/>
    <property type="match status" value="1"/>
</dbReference>
<dbReference type="PROSITE" id="PS50172">
    <property type="entry name" value="BRCT"/>
    <property type="match status" value="1"/>
</dbReference>
<protein>
    <recommendedName>
        <fullName evidence="1">DNA ligase</fullName>
        <ecNumber evidence="1">6.5.1.2</ecNumber>
    </recommendedName>
    <alternativeName>
        <fullName evidence="1">Polydeoxyribonucleotide synthase [NAD(+)]</fullName>
    </alternativeName>
</protein>
<comment type="function">
    <text evidence="1">DNA ligase that catalyzes the formation of phosphodiester linkages between 5'-phosphoryl and 3'-hydroxyl groups in double-stranded DNA using NAD as a coenzyme and as the energy source for the reaction. It is essential for DNA replication and repair of damaged DNA.</text>
</comment>
<comment type="catalytic activity">
    <reaction evidence="1">
        <text>NAD(+) + (deoxyribonucleotide)n-3'-hydroxyl + 5'-phospho-(deoxyribonucleotide)m = (deoxyribonucleotide)n+m + AMP + beta-nicotinamide D-nucleotide.</text>
        <dbReference type="EC" id="6.5.1.2"/>
    </reaction>
</comment>
<comment type="cofactor">
    <cofactor evidence="1">
        <name>Mg(2+)</name>
        <dbReference type="ChEBI" id="CHEBI:18420"/>
    </cofactor>
    <cofactor evidence="1">
        <name>Mn(2+)</name>
        <dbReference type="ChEBI" id="CHEBI:29035"/>
    </cofactor>
</comment>
<comment type="similarity">
    <text evidence="1">Belongs to the NAD-dependent DNA ligase family. LigA subfamily.</text>
</comment>
<name>DNLJ_ALKOO</name>
<reference key="1">
    <citation type="submission" date="2007-10" db="EMBL/GenBank/DDBJ databases">
        <title>Complete genome of Alkaliphilus oremlandii OhILAs.</title>
        <authorList>
            <person name="Copeland A."/>
            <person name="Lucas S."/>
            <person name="Lapidus A."/>
            <person name="Barry K."/>
            <person name="Detter J.C."/>
            <person name="Glavina del Rio T."/>
            <person name="Hammon N."/>
            <person name="Israni S."/>
            <person name="Dalin E."/>
            <person name="Tice H."/>
            <person name="Pitluck S."/>
            <person name="Chain P."/>
            <person name="Malfatti S."/>
            <person name="Shin M."/>
            <person name="Vergez L."/>
            <person name="Schmutz J."/>
            <person name="Larimer F."/>
            <person name="Land M."/>
            <person name="Hauser L."/>
            <person name="Kyrpides N."/>
            <person name="Mikhailova N."/>
            <person name="Stolz J.F."/>
            <person name="Dawson A."/>
            <person name="Fisher E."/>
            <person name="Crable B."/>
            <person name="Perera E."/>
            <person name="Lisak J."/>
            <person name="Ranganathan M."/>
            <person name="Basu P."/>
            <person name="Richardson P."/>
        </authorList>
    </citation>
    <scope>NUCLEOTIDE SEQUENCE [LARGE SCALE GENOMIC DNA]</scope>
    <source>
        <strain>OhILAs</strain>
    </source>
</reference>
<gene>
    <name evidence="1" type="primary">ligA</name>
    <name type="ordered locus">Clos_0550</name>
</gene>
<sequence length="661" mass="74559">MGSMERLRQLVDILNEYSYQYYVLDEPVVSDKEYDQLYDELVLLEKELNTVLEDSPTIRVGGDVLKNFKAHNHLAPLWSLDKCKTPEELISWDLRVRRLLEGSGVPIEYVMEYKFDGLTLNLTYNNGQLVQAATRGNGTTGEGILEQVKTIKTIPLTIPHKGRIEVQGEGLMGLSVLAAYNKTALEPLKNPRNAAAGALRNLDPKVTAKRKLSAFCYNVGFYEGIDFNTHMEILAFLKANKFPVSNYTKKFHTIHQVIEEIETIGEQVKSLDFLTDGLVIKVNHMEARRLLGYTQKFPRWAMAFKFEAEEMTTELKDVIWQVGRTGKLTPAAVLEPIDIGGVTVSRATLNNWEDIQRKKVKIGCRVWIRRSNDVIPEIMGSIEETLEGAMDIEKPQHCPACHSEVVERGAHIFCPNSLSCKPQLVSRIVHYASRDAMDIVGFSEKTAEQLFEELNLRDLADLYEIKYEDLIKLPRFGDKKARNLLEAIENSKNCKLDSFVYALGIPNVGRKTATDLAKHYKSFQAIQEAEFQELITLPDVGDIVAQSIIDFFEDEEIKKSVNRLINEGIRPLFKEVEQQENIFLGKTVVVTGTLEKYGRKEIKELLEKLGAKVTGSVSKNTDFLLAGEAAGSKLEKAMEIIASGVETSLRIISEAEFEAML</sequence>
<feature type="chain" id="PRO_0000340325" description="DNA ligase">
    <location>
        <begin position="1"/>
        <end position="661"/>
    </location>
</feature>
<feature type="domain" description="BRCT" evidence="1">
    <location>
        <begin position="578"/>
        <end position="661"/>
    </location>
</feature>
<feature type="active site" description="N6-AMP-lysine intermediate" evidence="1">
    <location>
        <position position="114"/>
    </location>
</feature>
<feature type="binding site" evidence="1">
    <location>
        <begin position="31"/>
        <end position="35"/>
    </location>
    <ligand>
        <name>NAD(+)</name>
        <dbReference type="ChEBI" id="CHEBI:57540"/>
    </ligand>
</feature>
<feature type="binding site" evidence="1">
    <location>
        <begin position="79"/>
        <end position="80"/>
    </location>
    <ligand>
        <name>NAD(+)</name>
        <dbReference type="ChEBI" id="CHEBI:57540"/>
    </ligand>
</feature>
<feature type="binding site" evidence="1">
    <location>
        <position position="112"/>
    </location>
    <ligand>
        <name>NAD(+)</name>
        <dbReference type="ChEBI" id="CHEBI:57540"/>
    </ligand>
</feature>
<feature type="binding site" evidence="1">
    <location>
        <position position="135"/>
    </location>
    <ligand>
        <name>NAD(+)</name>
        <dbReference type="ChEBI" id="CHEBI:57540"/>
    </ligand>
</feature>
<feature type="binding site" evidence="1">
    <location>
        <position position="169"/>
    </location>
    <ligand>
        <name>NAD(+)</name>
        <dbReference type="ChEBI" id="CHEBI:57540"/>
    </ligand>
</feature>
<feature type="binding site" evidence="1">
    <location>
        <position position="281"/>
    </location>
    <ligand>
        <name>NAD(+)</name>
        <dbReference type="ChEBI" id="CHEBI:57540"/>
    </ligand>
</feature>
<feature type="binding site" evidence="1">
    <location>
        <position position="305"/>
    </location>
    <ligand>
        <name>NAD(+)</name>
        <dbReference type="ChEBI" id="CHEBI:57540"/>
    </ligand>
</feature>
<feature type="binding site" evidence="1">
    <location>
        <position position="398"/>
    </location>
    <ligand>
        <name>Zn(2+)</name>
        <dbReference type="ChEBI" id="CHEBI:29105"/>
    </ligand>
</feature>
<feature type="binding site" evidence="1">
    <location>
        <position position="401"/>
    </location>
    <ligand>
        <name>Zn(2+)</name>
        <dbReference type="ChEBI" id="CHEBI:29105"/>
    </ligand>
</feature>
<feature type="binding site" evidence="1">
    <location>
        <position position="414"/>
    </location>
    <ligand>
        <name>Zn(2+)</name>
        <dbReference type="ChEBI" id="CHEBI:29105"/>
    </ligand>
</feature>
<feature type="binding site" evidence="1">
    <location>
        <position position="420"/>
    </location>
    <ligand>
        <name>Zn(2+)</name>
        <dbReference type="ChEBI" id="CHEBI:29105"/>
    </ligand>
</feature>
<proteinExistence type="inferred from homology"/>